<keyword id="KW-0249">Electron transport</keyword>
<keyword id="KW-0349">Heme</keyword>
<keyword id="KW-0408">Iron</keyword>
<keyword id="KW-0472">Membrane</keyword>
<keyword id="KW-0479">Metal-binding</keyword>
<keyword id="KW-0496">Mitochondrion</keyword>
<keyword id="KW-0999">Mitochondrion inner membrane</keyword>
<keyword id="KW-0679">Respiratory chain</keyword>
<keyword id="KW-0812">Transmembrane</keyword>
<keyword id="KW-1133">Transmembrane helix</keyword>
<keyword id="KW-0813">Transport</keyword>
<keyword id="KW-0830">Ubiquinone</keyword>
<geneLocation type="mitochondrion"/>
<comment type="function">
    <text evidence="2">Component of the ubiquinol-cytochrome c reductase complex (complex III or cytochrome b-c1 complex) that is part of the mitochondrial respiratory chain. The b-c1 complex mediates electron transfer from ubiquinol to cytochrome c. Contributes to the generation of a proton gradient across the mitochondrial membrane that is then used for ATP synthesis.</text>
</comment>
<comment type="cofactor">
    <cofactor evidence="2">
        <name>heme b</name>
        <dbReference type="ChEBI" id="CHEBI:60344"/>
    </cofactor>
    <text evidence="2">Binds 2 heme b groups non-covalently.</text>
</comment>
<comment type="subunit">
    <text evidence="2">The cytochrome bc1 complex contains 11 subunits: 3 respiratory subunits (MT-CYB, CYC1 and UQCRFS1), 2 core proteins (UQCRC1 and UQCRC2) and 6 low-molecular weight proteins (UQCRH/QCR6, UQCRB/QCR7, UQCRQ/QCR8, UQCR10/QCR9, UQCR11/QCR10 and a cleavage product of UQCRFS1). This cytochrome bc1 complex then forms a dimer.</text>
</comment>
<comment type="subcellular location">
    <subcellularLocation>
        <location evidence="2">Mitochondrion inner membrane</location>
        <topology evidence="2">Multi-pass membrane protein</topology>
    </subcellularLocation>
</comment>
<comment type="miscellaneous">
    <text evidence="1">Heme 1 (or BL or b562) is low-potential and absorbs at about 562 nm, and heme 2 (or BH or b566) is high-potential and absorbs at about 566 nm.</text>
</comment>
<comment type="similarity">
    <text evidence="3 4">Belongs to the cytochrome b family.</text>
</comment>
<comment type="caution">
    <text evidence="2">The full-length protein contains only eight transmembrane helices, not nine as predicted by bioinformatics tools.</text>
</comment>
<organism>
    <name type="scientific">Akodon siberiae</name>
    <name type="common">Cochabamba grass mouse</name>
    <dbReference type="NCBI Taxonomy" id="29100"/>
    <lineage>
        <taxon>Eukaryota</taxon>
        <taxon>Metazoa</taxon>
        <taxon>Chordata</taxon>
        <taxon>Craniata</taxon>
        <taxon>Vertebrata</taxon>
        <taxon>Euteleostomi</taxon>
        <taxon>Mammalia</taxon>
        <taxon>Eutheria</taxon>
        <taxon>Euarchontoglires</taxon>
        <taxon>Glires</taxon>
        <taxon>Rodentia</taxon>
        <taxon>Myomorpha</taxon>
        <taxon>Muroidea</taxon>
        <taxon>Cricetidae</taxon>
        <taxon>Sigmodontinae</taxon>
        <taxon>Akodon</taxon>
    </lineage>
</organism>
<feature type="chain" id="PRO_0000060554" description="Cytochrome b">
    <location>
        <begin position="1"/>
        <end position="379"/>
    </location>
</feature>
<feature type="transmembrane region" description="Helical" evidence="2">
    <location>
        <begin position="33"/>
        <end position="53"/>
    </location>
</feature>
<feature type="transmembrane region" description="Helical" evidence="2">
    <location>
        <begin position="77"/>
        <end position="98"/>
    </location>
</feature>
<feature type="transmembrane region" description="Helical" evidence="2">
    <location>
        <begin position="113"/>
        <end position="133"/>
    </location>
</feature>
<feature type="transmembrane region" description="Helical" evidence="2">
    <location>
        <begin position="178"/>
        <end position="198"/>
    </location>
</feature>
<feature type="transmembrane region" description="Helical" evidence="2">
    <location>
        <begin position="226"/>
        <end position="246"/>
    </location>
</feature>
<feature type="transmembrane region" description="Helical" evidence="2">
    <location>
        <begin position="288"/>
        <end position="308"/>
    </location>
</feature>
<feature type="transmembrane region" description="Helical" evidence="2">
    <location>
        <begin position="320"/>
        <end position="340"/>
    </location>
</feature>
<feature type="transmembrane region" description="Helical" evidence="2">
    <location>
        <begin position="347"/>
        <end position="367"/>
    </location>
</feature>
<feature type="binding site" description="axial binding residue" evidence="2">
    <location>
        <position position="83"/>
    </location>
    <ligand>
        <name>heme b</name>
        <dbReference type="ChEBI" id="CHEBI:60344"/>
        <label>b562</label>
    </ligand>
    <ligandPart>
        <name>Fe</name>
        <dbReference type="ChEBI" id="CHEBI:18248"/>
    </ligandPart>
</feature>
<feature type="binding site" description="axial binding residue" evidence="2">
    <location>
        <position position="97"/>
    </location>
    <ligand>
        <name>heme b</name>
        <dbReference type="ChEBI" id="CHEBI:60344"/>
        <label>b566</label>
    </ligand>
    <ligandPart>
        <name>Fe</name>
        <dbReference type="ChEBI" id="CHEBI:18248"/>
    </ligandPart>
</feature>
<feature type="binding site" description="axial binding residue" evidence="2">
    <location>
        <position position="182"/>
    </location>
    <ligand>
        <name>heme b</name>
        <dbReference type="ChEBI" id="CHEBI:60344"/>
        <label>b562</label>
    </ligand>
    <ligandPart>
        <name>Fe</name>
        <dbReference type="ChEBI" id="CHEBI:18248"/>
    </ligandPart>
</feature>
<feature type="binding site" description="axial binding residue" evidence="2">
    <location>
        <position position="196"/>
    </location>
    <ligand>
        <name>heme b</name>
        <dbReference type="ChEBI" id="CHEBI:60344"/>
        <label>b566</label>
    </ligand>
    <ligandPart>
        <name>Fe</name>
        <dbReference type="ChEBI" id="CHEBI:18248"/>
    </ligandPart>
</feature>
<feature type="binding site" evidence="2">
    <location>
        <position position="201"/>
    </location>
    <ligand>
        <name>a ubiquinone</name>
        <dbReference type="ChEBI" id="CHEBI:16389"/>
    </ligand>
</feature>
<evidence type="ECO:0000250" key="1"/>
<evidence type="ECO:0000250" key="2">
    <source>
        <dbReference type="UniProtKB" id="P00157"/>
    </source>
</evidence>
<evidence type="ECO:0000255" key="3">
    <source>
        <dbReference type="PROSITE-ProRule" id="PRU00967"/>
    </source>
</evidence>
<evidence type="ECO:0000255" key="4">
    <source>
        <dbReference type="PROSITE-ProRule" id="PRU00968"/>
    </source>
</evidence>
<reference key="1">
    <citation type="journal article" date="2003" name="Cladistics">
        <title>Phylogenetics of Sigmodontinae (Rodentia, Muroidea, Cricetidae), with special reference to the akodont group, and with additional comments on historical biogeography.</title>
        <authorList>
            <person name="D'Elia G."/>
        </authorList>
    </citation>
    <scope>NUCLEOTIDE SEQUENCE [GENOMIC DNA]</scope>
</reference>
<reference key="2">
    <citation type="submission" date="2003-12" db="EMBL/GenBank/DDBJ databases">
        <title>Molecular phylogenetics and diversification of South American grass mice, genus Akodon.</title>
        <authorList>
            <person name="Smith M.F."/>
            <person name="Patton J.L."/>
        </authorList>
    </citation>
    <scope>NUCLEOTIDE SEQUENCE [GENOMIC DNA]</scope>
    <source>
        <strain>Isolate MSB 55209</strain>
        <tissue>Liver</tissue>
    </source>
</reference>
<reference key="3">
    <citation type="journal article" date="1993" name="Biol. J. Linn. Soc. Lond.">
        <title>The diversification of South American murid rodents: evidence from mitochondrial DNA sequence data for the akodontine tribe.</title>
        <authorList>
            <person name="Smith M.F."/>
            <person name="Patton J.L."/>
        </authorList>
    </citation>
    <scope>NUCLEOTIDE SEQUENCE [GENOMIC DNA] OF 1-267</scope>
    <source>
        <strain>Isolate MSB 55209</strain>
        <tissue>Liver</tissue>
    </source>
</reference>
<name>CYB_AKOSI</name>
<proteinExistence type="inferred from homology"/>
<accession>P48521</accession>
<protein>
    <recommendedName>
        <fullName>Cytochrome b</fullName>
    </recommendedName>
    <alternativeName>
        <fullName>Complex III subunit 3</fullName>
    </alternativeName>
    <alternativeName>
        <fullName>Complex III subunit III</fullName>
    </alternativeName>
    <alternativeName>
        <fullName>Cytochrome b-c1 complex subunit 3</fullName>
    </alternativeName>
    <alternativeName>
        <fullName>Ubiquinol-cytochrome-c reductase complex cytochrome b subunit</fullName>
    </alternativeName>
</protein>
<sequence length="379" mass="42636">MKILRKNHPLLKIVNHSFIDLPTPSNISSWWNFGSLLGVCLIIQILTGLFLAMHYTSDTTTAFSSVAHICRDVNYGWLIRYLHANGASMFFICLFIHVGRGIYYGSYILSETWNIGIILFLTTMATAFVGYVLPWGQMSFWGATVITNLLSAIPYIGNTLVEWIWGGFSVDKATLTRFFAFHFILPFIITAFALVHLLFLHETGSNNPSGLNSDSDKIPFHPYYTIKDLLGIFLLLMVLMILALFFPDVLGDPDNFTPANPLNTPAHIKPEWYFLFAYAILRSIPNKLGGVLALILSILILAAFPLLNTSKQHGLIFRPVTQTIYWTFIANLLVLTWIGGQPVEYPFTTIGQIASITYFTIIIILMPVSNTIENNIIKL</sequence>
<gene>
    <name type="primary">MT-CYB</name>
    <name type="synonym">COB</name>
    <name type="synonym">CYTB</name>
    <name type="synonym">MTCYB</name>
</gene>
<dbReference type="EMBL" id="AY273909">
    <property type="protein sequence ID" value="AAQ20026.1"/>
    <property type="molecule type" value="Genomic_DNA"/>
</dbReference>
<dbReference type="EMBL" id="U03548">
    <property type="protein sequence ID" value="AAD12574.2"/>
    <property type="molecule type" value="Genomic_DNA"/>
</dbReference>
<dbReference type="SMR" id="P48521"/>
<dbReference type="GO" id="GO:0005743">
    <property type="term" value="C:mitochondrial inner membrane"/>
    <property type="evidence" value="ECO:0007669"/>
    <property type="project" value="UniProtKB-SubCell"/>
</dbReference>
<dbReference type="GO" id="GO:0045275">
    <property type="term" value="C:respiratory chain complex III"/>
    <property type="evidence" value="ECO:0007669"/>
    <property type="project" value="InterPro"/>
</dbReference>
<dbReference type="GO" id="GO:0046872">
    <property type="term" value="F:metal ion binding"/>
    <property type="evidence" value="ECO:0007669"/>
    <property type="project" value="UniProtKB-KW"/>
</dbReference>
<dbReference type="GO" id="GO:0008121">
    <property type="term" value="F:ubiquinol-cytochrome-c reductase activity"/>
    <property type="evidence" value="ECO:0007669"/>
    <property type="project" value="InterPro"/>
</dbReference>
<dbReference type="GO" id="GO:0006122">
    <property type="term" value="P:mitochondrial electron transport, ubiquinol to cytochrome c"/>
    <property type="evidence" value="ECO:0007669"/>
    <property type="project" value="TreeGrafter"/>
</dbReference>
<dbReference type="CDD" id="cd00290">
    <property type="entry name" value="cytochrome_b_C"/>
    <property type="match status" value="1"/>
</dbReference>
<dbReference type="CDD" id="cd00284">
    <property type="entry name" value="Cytochrome_b_N"/>
    <property type="match status" value="1"/>
</dbReference>
<dbReference type="FunFam" id="1.20.810.10:FF:000002">
    <property type="entry name" value="Cytochrome b"/>
    <property type="match status" value="1"/>
</dbReference>
<dbReference type="Gene3D" id="1.20.810.10">
    <property type="entry name" value="Cytochrome Bc1 Complex, Chain C"/>
    <property type="match status" value="1"/>
</dbReference>
<dbReference type="InterPro" id="IPR005798">
    <property type="entry name" value="Cyt_b/b6_C"/>
</dbReference>
<dbReference type="InterPro" id="IPR036150">
    <property type="entry name" value="Cyt_b/b6_C_sf"/>
</dbReference>
<dbReference type="InterPro" id="IPR005797">
    <property type="entry name" value="Cyt_b/b6_N"/>
</dbReference>
<dbReference type="InterPro" id="IPR027387">
    <property type="entry name" value="Cytb/b6-like_sf"/>
</dbReference>
<dbReference type="InterPro" id="IPR030689">
    <property type="entry name" value="Cytochrome_b"/>
</dbReference>
<dbReference type="InterPro" id="IPR048260">
    <property type="entry name" value="Cytochrome_b_C_euk/bac"/>
</dbReference>
<dbReference type="InterPro" id="IPR048259">
    <property type="entry name" value="Cytochrome_b_N_euk/bac"/>
</dbReference>
<dbReference type="InterPro" id="IPR016174">
    <property type="entry name" value="Di-haem_cyt_TM"/>
</dbReference>
<dbReference type="PANTHER" id="PTHR19271">
    <property type="entry name" value="CYTOCHROME B"/>
    <property type="match status" value="1"/>
</dbReference>
<dbReference type="PANTHER" id="PTHR19271:SF16">
    <property type="entry name" value="CYTOCHROME B"/>
    <property type="match status" value="1"/>
</dbReference>
<dbReference type="Pfam" id="PF00032">
    <property type="entry name" value="Cytochrom_B_C"/>
    <property type="match status" value="1"/>
</dbReference>
<dbReference type="Pfam" id="PF00033">
    <property type="entry name" value="Cytochrome_B"/>
    <property type="match status" value="1"/>
</dbReference>
<dbReference type="PIRSF" id="PIRSF038885">
    <property type="entry name" value="COB"/>
    <property type="match status" value="1"/>
</dbReference>
<dbReference type="SUPFAM" id="SSF81648">
    <property type="entry name" value="a domain/subunit of cytochrome bc1 complex (Ubiquinol-cytochrome c reductase)"/>
    <property type="match status" value="1"/>
</dbReference>
<dbReference type="SUPFAM" id="SSF81342">
    <property type="entry name" value="Transmembrane di-heme cytochromes"/>
    <property type="match status" value="1"/>
</dbReference>
<dbReference type="PROSITE" id="PS51003">
    <property type="entry name" value="CYTB_CTER"/>
    <property type="match status" value="1"/>
</dbReference>
<dbReference type="PROSITE" id="PS51002">
    <property type="entry name" value="CYTB_NTER"/>
    <property type="match status" value="1"/>
</dbReference>